<gene>
    <name evidence="13" type="primary">Nsg1</name>
    <name type="synonym">Bsmrb</name>
</gene>
<sequence length="185" mass="20943">MVKLGNNFAEKGTKQPLLEDGFDTIPLMTPLDVNQLQFPPPDKVVVKTKTEYEPDRKKGKARPPKIAEFTVSITEGVTERFKVSVLVLFALAFLTCVVFLVVYKVYKYDRACPDGFVLKNTQCIPEGLESYYTEQDSSAREKFYTVINHYNLAKQSITRSVSPWMSVLSEEKLSEQETEAAEKSA</sequence>
<name>NSG1_RAT</name>
<organism>
    <name type="scientific">Rattus norvegicus</name>
    <name type="common">Rat</name>
    <dbReference type="NCBI Taxonomy" id="10116"/>
    <lineage>
        <taxon>Eukaryota</taxon>
        <taxon>Metazoa</taxon>
        <taxon>Chordata</taxon>
        <taxon>Craniata</taxon>
        <taxon>Vertebrata</taxon>
        <taxon>Euteleostomi</taxon>
        <taxon>Mammalia</taxon>
        <taxon>Eutheria</taxon>
        <taxon>Euarchontoglires</taxon>
        <taxon>Glires</taxon>
        <taxon>Rodentia</taxon>
        <taxon>Myomorpha</taxon>
        <taxon>Muroidea</taxon>
        <taxon>Muridae</taxon>
        <taxon>Murinae</taxon>
        <taxon>Rattus</taxon>
    </lineage>
</organism>
<evidence type="ECO:0000250" key="1">
    <source>
        <dbReference type="UniProtKB" id="P42857"/>
    </source>
</evidence>
<evidence type="ECO:0000250" key="2">
    <source>
        <dbReference type="UniProtKB" id="Q62092"/>
    </source>
</evidence>
<evidence type="ECO:0000255" key="3"/>
<evidence type="ECO:0000269" key="4">
    <source>
    </source>
</evidence>
<evidence type="ECO:0000269" key="5">
    <source>
    </source>
</evidence>
<evidence type="ECO:0000269" key="6">
    <source>
    </source>
</evidence>
<evidence type="ECO:0000269" key="7">
    <source>
    </source>
</evidence>
<evidence type="ECO:0000269" key="8">
    <source>
    </source>
</evidence>
<evidence type="ECO:0000269" key="9">
    <source>
    </source>
</evidence>
<evidence type="ECO:0000269" key="10">
    <source>
    </source>
</evidence>
<evidence type="ECO:0000269" key="11">
    <source>
    </source>
</evidence>
<evidence type="ECO:0000305" key="12"/>
<evidence type="ECO:0000312" key="13">
    <source>
        <dbReference type="RGD" id="2222"/>
    </source>
</evidence>
<reference key="1">
    <citation type="journal article" date="2004" name="Genome Res.">
        <title>The status, quality, and expansion of the NIH full-length cDNA project: the Mammalian Gene Collection (MGC).</title>
        <authorList>
            <consortium name="The MGC Project Team"/>
        </authorList>
    </citation>
    <scope>NUCLEOTIDE SEQUENCE [LARGE SCALE MRNA]</scope>
    <source>
        <tissue>Pituitary</tissue>
    </source>
</reference>
<reference key="2">
    <citation type="journal article" date="1983" name="Cell">
        <title>Identifying the protein products of brain-specific genes with antibodies to chemically synthesized peptides.</title>
        <authorList>
            <person name="Sutcliffe J.G."/>
            <person name="Milner R.J."/>
            <person name="Shinnick T.M."/>
            <person name="Bloom F.E."/>
        </authorList>
    </citation>
    <scope>NUCLEOTIDE SEQUENCE [GENOMIC DNA] OF 103-185</scope>
    <scope>TISSUE SPECIFICITY</scope>
    <source>
        <tissue>Brain</tissue>
    </source>
</reference>
<reference key="3">
    <citation type="journal article" date="1996" name="Brain Res. Mol. Brain Res.">
        <title>Variable subcellular localization of a neuron-specific protein during NTera 2 differentiation into post-mitotic human neurons.</title>
        <authorList>
            <person name="Carlock L."/>
            <person name="Vo T."/>
            <person name="Lorincz M."/>
            <person name="Walker P.D."/>
            <person name="Bessert D."/>
            <person name="Wisniewski D."/>
            <person name="Dunbar J.C."/>
        </authorList>
    </citation>
    <scope>TISSUE SPECIFICITY</scope>
</reference>
<reference key="4">
    <citation type="journal article" date="1998" name="J. Biol. Chem.">
        <title>A 21-kDa polypeptide belonging to a new family of proteins is expressed in the Golgi apparatus of neural and germ cells.</title>
        <authorList>
            <person name="Saberan-Djoneidi D."/>
            <person name="Picart R."/>
            <person name="Escalier D."/>
            <person name="Gelman M."/>
            <person name="Barret A."/>
            <person name="Tougard C."/>
            <person name="Glowinski J."/>
            <person name="Levi-Strauss M."/>
        </authorList>
    </citation>
    <scope>TISSUE SPECIFICITY</scope>
    <scope>SUBCELLULAR LOCATION</scope>
</reference>
<reference key="5">
    <citation type="journal article" date="2002" name="J. Cell Biol.">
        <title>Modulation of receptor cycling by neuron-enriched endosomal protein of 21 kD.</title>
        <authorList>
            <person name="Steiner P."/>
            <person name="Sarria J.C."/>
            <person name="Glauser L."/>
            <person name="Magnin S."/>
            <person name="Catsicas S."/>
            <person name="Hirling H."/>
        </authorList>
    </citation>
    <scope>INTERACTION WITH STX12</scope>
    <scope>SUBCELLULAR LOCATION</scope>
    <scope>TISSUE SPECIFICITY</scope>
</reference>
<reference key="6">
    <citation type="journal article" date="2005" name="EMBO J.">
        <title>Interactions between NEEP21, GRIP1 and GluR2 regulate sorting and recycling of the glutamate receptor subunit GluR2.</title>
        <authorList>
            <person name="Steiner P."/>
            <person name="Alberi S."/>
            <person name="Kulangara K."/>
            <person name="Yersin A."/>
            <person name="Sarria J.C."/>
            <person name="Regulier E."/>
            <person name="Kasas S."/>
            <person name="Dietler G."/>
            <person name="Muller D."/>
            <person name="Catsicas S."/>
            <person name="Hirling H."/>
        </authorList>
    </citation>
    <scope>INTERACTION WITH GRIP1</scope>
    <scope>COMPLEX FORMATION WITH GRIP1; GRIA2 AND STX12</scope>
    <scope>REGION</scope>
</reference>
<reference key="7">
    <citation type="journal article" date="2005" name="Mol. Cell. Neurosci.">
        <title>The endosomal protein NEEP21 regulates AMPA receptor-mediated synaptic transmission and plasticity in the hippocampus.</title>
        <authorList>
            <person name="Alberi S."/>
            <person name="Boda B."/>
            <person name="Steiner P."/>
            <person name="Nikonenko I."/>
            <person name="Hirling H."/>
            <person name="Muller D."/>
        </authorList>
    </citation>
    <scope>FUNCTION</scope>
</reference>
<reference key="8">
    <citation type="journal article" date="2008" name="J. Cell Biol.">
        <title>The somatodendritic endosomal regulator NEEP21 facilitates axonal targeting of L1/NgCAM.</title>
        <authorList>
            <person name="Yap C.C."/>
            <person name="Wisco D."/>
            <person name="Kujala P."/>
            <person name="Lasiecka Z.M."/>
            <person name="Cannon J.T."/>
            <person name="Chang M.C."/>
            <person name="Hirling H."/>
            <person name="Klumperman J."/>
            <person name="Winckler B."/>
        </authorList>
    </citation>
    <scope>FUNCTION</scope>
    <scope>SUBCELLULAR LOCATION</scope>
</reference>
<reference key="9">
    <citation type="journal article" date="2017" name="Sci. Rep.">
        <title>The endosomal neuronal proteins Nsg1/NEEP21 and Nsg2/P19 are itinerant, not resident proteins of dendritic endosomes.</title>
        <authorList>
            <person name="Yap C.C."/>
            <person name="Digilio L."/>
            <person name="McMahon L."/>
            <person name="Winckler B."/>
        </authorList>
    </citation>
    <scope>SUBCELLULAR LOCATION</scope>
    <scope>TOPOLOGY</scope>
</reference>
<protein>
    <recommendedName>
        <fullName evidence="1">Neuronal vesicle trafficking-associated protein 1</fullName>
    </recommendedName>
    <alternativeName>
        <fullName>Brain neuron cytoplasmic protein 1/2</fullName>
    </alternativeName>
    <alternativeName>
        <fullName evidence="1">Neuron-enriched endosomal protein of 21 kDa</fullName>
    </alternativeName>
    <alternativeName>
        <fullName evidence="1">Neuron-specific protein family member 1</fullName>
    </alternativeName>
</protein>
<comment type="function">
    <text evidence="1 5 7">Plays a role in the recycling mechanism in neurons of multiple receptors, including AMPAR, APP and L1CAM and acts at the level of early endosomes to promote sorting of receptors toward a recycling pathway (PubMed:15911354, PubMed:18299352). Regulates sorting and recycling of GRIA2 through interaction with GRIP1 and then contributes to the regulation of synaptic transmission and plasticity by affecting the recycling and targeting of AMPA receptors to the synapse (PubMed:15911354). Is required for faithful sorting of L1CAM to axons by facilitating trafficking from somatodendritic early endosome or the recycling endosome (PubMed:18299352). In an other hand, induces apoptosis via the activation of CASP3 in response to DNA damage (By similarity).</text>
</comment>
<comment type="subunit">
    <text evidence="1 2 4 6">Forms a complex with GRIP1, GRIA2 and STX12; controls the intracellular fate of AMPAR and the endosomal sorting of the GRIA2 subunit toward recycling and membrane targeting. Interacts with GRIP1 (PubMed:16037816). Interacts with STX12 (PubMed:12070131). Interacts with APP; could regulate APP processing (By similarity). Interacts with FAM171A1 (By similarity).</text>
</comment>
<comment type="subcellular location">
    <subcellularLocation>
        <location evidence="8">Membrane</location>
        <topology evidence="8">Single-pass type II membrane protein</topology>
    </subcellularLocation>
    <subcellularLocation>
        <location evidence="8">Golgi apparatus</location>
        <location evidence="8">trans-Golgi network membrane</location>
    </subcellularLocation>
    <subcellularLocation>
        <location evidence="7 8">Endosome membrane</location>
    </subcellularLocation>
    <subcellularLocation>
        <location evidence="4 8">Cell projection</location>
        <location evidence="4 8">Dendrite</location>
    </subcellularLocation>
    <subcellularLocation>
        <location evidence="4 8">Early endosome membrane</location>
    </subcellularLocation>
    <subcellularLocation>
        <location evidence="8">Late endosome membrane</location>
    </subcellularLocation>
    <subcellularLocation>
        <location evidence="8">Lysosome lumen</location>
    </subcellularLocation>
    <subcellularLocation>
        <location evidence="4">Recycling endosome membrane</location>
    </subcellularLocation>
    <subcellularLocation>
        <location evidence="11">Cytoplasmic vesicle membrane</location>
    </subcellularLocation>
    <subcellularLocation>
        <location evidence="11">Golgi apparatus</location>
        <location evidence="11">Golgi stack membrane</location>
    </subcellularLocation>
    <subcellularLocation>
        <location evidence="11">Endosome</location>
        <location evidence="11">Multivesicular body membrane</location>
    </subcellularLocation>
    <subcellularLocation>
        <location evidence="1">Endoplasmic reticulum membrane</location>
    </subcellularLocation>
    <text evidence="1 2 8">Endocytosed from the cell surface, thus enters into early endosomes, trafficks to late endosomes and degradates in lysosomes (PubMed:28874679). Endoplasmic reticulum targeting is essential for apoptosis (By similarity). Found in both stationary and motile endosomes. A previous study supports a type I membrane protein topology (By similarity).</text>
</comment>
<comment type="tissue specificity">
    <text evidence="4 9 10 11">Widely expressed in brain and spinal cord (PubMed:6347394, PubMed:9013775, PubMed:9461575). Expressed in neurons during maturation and synapse formation (PubMed:12070131).</text>
</comment>
<comment type="similarity">
    <text evidence="12">Belongs to the NSG family.</text>
</comment>
<comment type="sequence caution" evidence="12">
    <conflict type="erroneous translation">
        <sequence resource="EMBL-CDS" id="CAA24785"/>
    </conflict>
    <text>Wrong choice of frame.</text>
</comment>
<accession>P02683</accession>
<accession>P02684</accession>
<accession>Q6P9Y0</accession>
<feature type="chain" id="PRO_0000164365" description="Neuronal vesicle trafficking-associated protein 1">
    <location>
        <begin position="1"/>
        <end position="185"/>
    </location>
</feature>
<feature type="topological domain" description="Cytoplasmic" evidence="8">
    <location>
        <begin position="1"/>
        <end position="82"/>
    </location>
</feature>
<feature type="transmembrane region" description="Helical; Signal-anchor for type II membrane protein" evidence="3">
    <location>
        <begin position="83"/>
        <end position="103"/>
    </location>
</feature>
<feature type="topological domain" description="Lumenal" evidence="8">
    <location>
        <begin position="104"/>
        <end position="185"/>
    </location>
</feature>
<feature type="region of interest" description="Required for GRIP1 interaction" evidence="6">
    <location>
        <begin position="129"/>
        <end position="164"/>
    </location>
</feature>
<proteinExistence type="evidence at protein level"/>
<dbReference type="EMBL" id="BC060538">
    <property type="protein sequence ID" value="AAH60538.1"/>
    <property type="molecule type" value="mRNA"/>
</dbReference>
<dbReference type="EMBL" id="V01543">
    <property type="protein sequence ID" value="CAA24784.1"/>
    <property type="molecule type" value="Genomic_DNA"/>
</dbReference>
<dbReference type="EMBL" id="V01543">
    <property type="protein sequence ID" value="CAA24785.1"/>
    <property type="status" value="ALT_SEQ"/>
    <property type="molecule type" value="Genomic_DNA"/>
</dbReference>
<dbReference type="PIR" id="A03136">
    <property type="entry name" value="BNRT1"/>
</dbReference>
<dbReference type="PIR" id="A03137">
    <property type="entry name" value="BNRT2"/>
</dbReference>
<dbReference type="RefSeq" id="NP_077042.2">
    <property type="nucleotide sequence ID" value="NM_024128.3"/>
</dbReference>
<dbReference type="RefSeq" id="XP_038947551.1">
    <property type="nucleotide sequence ID" value="XM_039091623.2"/>
</dbReference>
<dbReference type="SMR" id="P02683"/>
<dbReference type="BioGRID" id="247287">
    <property type="interactions" value="1"/>
</dbReference>
<dbReference type="CORUM" id="P02683"/>
<dbReference type="FunCoup" id="P02683">
    <property type="interactions" value="1363"/>
</dbReference>
<dbReference type="STRING" id="10116.ENSRNOP00000008030"/>
<dbReference type="iPTMnet" id="P02683"/>
<dbReference type="PhosphoSitePlus" id="P02683"/>
<dbReference type="PaxDb" id="10116-ENSRNOP00000008030"/>
<dbReference type="Ensembl" id="ENSRNOT00000118922.1">
    <property type="protein sequence ID" value="ENSRNOP00000097258.1"/>
    <property type="gene ID" value="ENSRNOG00000005700.8"/>
</dbReference>
<dbReference type="GeneID" id="25247"/>
<dbReference type="KEGG" id="rno:25247"/>
<dbReference type="AGR" id="RGD:2222"/>
<dbReference type="CTD" id="27065"/>
<dbReference type="RGD" id="2222">
    <property type="gene designation" value="Nsg1"/>
</dbReference>
<dbReference type="eggNOG" id="ENOG502QSAI">
    <property type="taxonomic scope" value="Eukaryota"/>
</dbReference>
<dbReference type="GeneTree" id="ENSGT00390000000483"/>
<dbReference type="HOGENOM" id="CLU_112085_1_0_1"/>
<dbReference type="InParanoid" id="P02683"/>
<dbReference type="OMA" id="MQGRCMP"/>
<dbReference type="OrthoDB" id="8924576at2759"/>
<dbReference type="PhylomeDB" id="P02683"/>
<dbReference type="TreeFam" id="TF332232"/>
<dbReference type="PRO" id="PR:P02683"/>
<dbReference type="Proteomes" id="UP000002494">
    <property type="component" value="Chromosome 14"/>
</dbReference>
<dbReference type="Bgee" id="ENSRNOG00000005700">
    <property type="expression patterns" value="Expressed in cerebellum and 20 other cell types or tissues"/>
</dbReference>
<dbReference type="GO" id="GO:0030425">
    <property type="term" value="C:dendrite"/>
    <property type="evidence" value="ECO:0000314"/>
    <property type="project" value="UniProtKB"/>
</dbReference>
<dbReference type="GO" id="GO:0005769">
    <property type="term" value="C:early endosome"/>
    <property type="evidence" value="ECO:0000314"/>
    <property type="project" value="UniProtKB"/>
</dbReference>
<dbReference type="GO" id="GO:0031901">
    <property type="term" value="C:early endosome membrane"/>
    <property type="evidence" value="ECO:0000314"/>
    <property type="project" value="UniProtKB"/>
</dbReference>
<dbReference type="GO" id="GO:0005783">
    <property type="term" value="C:endoplasmic reticulum"/>
    <property type="evidence" value="ECO:0000250"/>
    <property type="project" value="UniProtKB"/>
</dbReference>
<dbReference type="GO" id="GO:0005789">
    <property type="term" value="C:endoplasmic reticulum membrane"/>
    <property type="evidence" value="ECO:0007669"/>
    <property type="project" value="UniProtKB-SubCell"/>
</dbReference>
<dbReference type="GO" id="GO:0005768">
    <property type="term" value="C:endosome"/>
    <property type="evidence" value="ECO:0000314"/>
    <property type="project" value="UniProtKB"/>
</dbReference>
<dbReference type="GO" id="GO:0098978">
    <property type="term" value="C:glutamatergic synapse"/>
    <property type="evidence" value="ECO:0000314"/>
    <property type="project" value="SynGO"/>
</dbReference>
<dbReference type="GO" id="GO:0032580">
    <property type="term" value="C:Golgi cisterna membrane"/>
    <property type="evidence" value="ECO:0007669"/>
    <property type="project" value="UniProtKB-SubCell"/>
</dbReference>
<dbReference type="GO" id="GO:0005770">
    <property type="term" value="C:late endosome"/>
    <property type="evidence" value="ECO:0000314"/>
    <property type="project" value="UniProtKB"/>
</dbReference>
<dbReference type="GO" id="GO:0016328">
    <property type="term" value="C:lateral plasma membrane"/>
    <property type="evidence" value="ECO:0000266"/>
    <property type="project" value="RGD"/>
</dbReference>
<dbReference type="GO" id="GO:0043202">
    <property type="term" value="C:lysosomal lumen"/>
    <property type="evidence" value="ECO:0000314"/>
    <property type="project" value="UniProtKB"/>
</dbReference>
<dbReference type="GO" id="GO:0016020">
    <property type="term" value="C:membrane"/>
    <property type="evidence" value="ECO:0000318"/>
    <property type="project" value="GO_Central"/>
</dbReference>
<dbReference type="GO" id="GO:0032585">
    <property type="term" value="C:multivesicular body membrane"/>
    <property type="evidence" value="ECO:0007669"/>
    <property type="project" value="UniProtKB-SubCell"/>
</dbReference>
<dbReference type="GO" id="GO:0098845">
    <property type="term" value="C:postsynaptic endosome"/>
    <property type="evidence" value="ECO:0000314"/>
    <property type="project" value="SynGO"/>
</dbReference>
<dbReference type="GO" id="GO:0045211">
    <property type="term" value="C:postsynaptic membrane"/>
    <property type="evidence" value="ECO:0000266"/>
    <property type="project" value="RGD"/>
</dbReference>
<dbReference type="GO" id="GO:0055038">
    <property type="term" value="C:recycling endosome membrane"/>
    <property type="evidence" value="ECO:0000314"/>
    <property type="project" value="UniProtKB"/>
</dbReference>
<dbReference type="GO" id="GO:0036477">
    <property type="term" value="C:somatodendritic compartment"/>
    <property type="evidence" value="ECO:0000314"/>
    <property type="project" value="UniProtKB"/>
</dbReference>
<dbReference type="GO" id="GO:0032588">
    <property type="term" value="C:trans-Golgi network membrane"/>
    <property type="evidence" value="ECO:0000314"/>
    <property type="project" value="UniProtKB"/>
</dbReference>
<dbReference type="GO" id="GO:0032051">
    <property type="term" value="F:clathrin light chain binding"/>
    <property type="evidence" value="ECO:0000318"/>
    <property type="project" value="GO_Central"/>
</dbReference>
<dbReference type="GO" id="GO:0035255">
    <property type="term" value="F:ionotropic glutamate receptor binding"/>
    <property type="evidence" value="ECO:0000353"/>
    <property type="project" value="RGD"/>
</dbReference>
<dbReference type="GO" id="GO:0005102">
    <property type="term" value="F:signaling receptor binding"/>
    <property type="evidence" value="ECO:0000353"/>
    <property type="project" value="RGD"/>
</dbReference>
<dbReference type="GO" id="GO:0042982">
    <property type="term" value="P:amyloid precursor protein metabolic process"/>
    <property type="evidence" value="ECO:0000250"/>
    <property type="project" value="UniProtKB"/>
</dbReference>
<dbReference type="GO" id="GO:0006915">
    <property type="term" value="P:apoptotic process"/>
    <property type="evidence" value="ECO:0000250"/>
    <property type="project" value="UniProtKB"/>
</dbReference>
<dbReference type="GO" id="GO:0048268">
    <property type="term" value="P:clathrin coat assembly"/>
    <property type="evidence" value="ECO:0000318"/>
    <property type="project" value="GO_Central"/>
</dbReference>
<dbReference type="GO" id="GO:0016197">
    <property type="term" value="P:endosomal transport"/>
    <property type="evidence" value="ECO:0000315"/>
    <property type="project" value="RGD"/>
</dbReference>
<dbReference type="GO" id="GO:0099627">
    <property type="term" value="P:neurotransmitter receptor cycle"/>
    <property type="evidence" value="ECO:0000250"/>
    <property type="project" value="UniProtKB"/>
</dbReference>
<dbReference type="GO" id="GO:0098887">
    <property type="term" value="P:neurotransmitter receptor transport, endosome to postsynaptic membrane"/>
    <property type="evidence" value="ECO:0000266"/>
    <property type="project" value="RGD"/>
</dbReference>
<dbReference type="GO" id="GO:0001921">
    <property type="term" value="P:positive regulation of receptor recycling"/>
    <property type="evidence" value="ECO:0000315"/>
    <property type="project" value="RGD"/>
</dbReference>
<dbReference type="GO" id="GO:0099630">
    <property type="term" value="P:postsynaptic neurotransmitter receptor cycle"/>
    <property type="evidence" value="ECO:0000315"/>
    <property type="project" value="UniProtKB"/>
</dbReference>
<dbReference type="GO" id="GO:0001881">
    <property type="term" value="P:receptor recycling"/>
    <property type="evidence" value="ECO:0000250"/>
    <property type="project" value="UniProtKB"/>
</dbReference>
<dbReference type="GO" id="GO:1900271">
    <property type="term" value="P:regulation of long-term synaptic potentiation"/>
    <property type="evidence" value="ECO:0000315"/>
    <property type="project" value="UniProtKB"/>
</dbReference>
<dbReference type="GO" id="GO:0098814">
    <property type="term" value="P:spontaneous synaptic transmission"/>
    <property type="evidence" value="ECO:0000315"/>
    <property type="project" value="UniProtKB"/>
</dbReference>
<dbReference type="GO" id="GO:0099003">
    <property type="term" value="P:vesicle-mediated transport in synapse"/>
    <property type="evidence" value="ECO:0000266"/>
    <property type="project" value="RGD"/>
</dbReference>
<dbReference type="InterPro" id="IPR009431">
    <property type="entry name" value="NSG"/>
</dbReference>
<dbReference type="PANTHER" id="PTHR28546:SF3">
    <property type="entry name" value="NEURONAL VESICLE TRAFFICKING-ASSOCIATED PROTEIN 1"/>
    <property type="match status" value="1"/>
</dbReference>
<dbReference type="PANTHER" id="PTHR28546">
    <property type="entry name" value="NEURONAL VESICLE TRAFFICKING-ASSOCIATED PROTEIN 2-RELATED"/>
    <property type="match status" value="1"/>
</dbReference>
<dbReference type="Pfam" id="PF06387">
    <property type="entry name" value="Calcyon"/>
    <property type="match status" value="1"/>
</dbReference>
<dbReference type="PIRSF" id="PIRSF002383">
    <property type="entry name" value="Calcyon"/>
    <property type="match status" value="1"/>
</dbReference>
<keyword id="KW-0966">Cell projection</keyword>
<keyword id="KW-0968">Cytoplasmic vesicle</keyword>
<keyword id="KW-0256">Endoplasmic reticulum</keyword>
<keyword id="KW-0967">Endosome</keyword>
<keyword id="KW-0333">Golgi apparatus</keyword>
<keyword id="KW-0458">Lysosome</keyword>
<keyword id="KW-0472">Membrane</keyword>
<keyword id="KW-1185">Reference proteome</keyword>
<keyword id="KW-0735">Signal-anchor</keyword>
<keyword id="KW-0812">Transmembrane</keyword>
<keyword id="KW-1133">Transmembrane helix</keyword>